<accession>O29850</accession>
<name>Y397_ARCFU</name>
<dbReference type="EMBL" id="AE000782">
    <property type="protein sequence ID" value="AAB90845.1"/>
    <property type="molecule type" value="Genomic_DNA"/>
</dbReference>
<dbReference type="PIR" id="E69299">
    <property type="entry name" value="E69299"/>
</dbReference>
<dbReference type="STRING" id="224325.AF_0397"/>
<dbReference type="PaxDb" id="224325-AF_0397"/>
<dbReference type="EnsemblBacteria" id="AAB90845">
    <property type="protein sequence ID" value="AAB90845"/>
    <property type="gene ID" value="AF_0397"/>
</dbReference>
<dbReference type="KEGG" id="afu:AF_0397"/>
<dbReference type="HOGENOM" id="CLU_1529136_0_0_2"/>
<dbReference type="Proteomes" id="UP000002199">
    <property type="component" value="Chromosome"/>
</dbReference>
<dbReference type="PROSITE" id="PS51257">
    <property type="entry name" value="PROKAR_LIPOPROTEIN"/>
    <property type="match status" value="1"/>
</dbReference>
<organism>
    <name type="scientific">Archaeoglobus fulgidus (strain ATCC 49558 / DSM 4304 / JCM 9628 / NBRC 100126 / VC-16)</name>
    <dbReference type="NCBI Taxonomy" id="224325"/>
    <lineage>
        <taxon>Archaea</taxon>
        <taxon>Methanobacteriati</taxon>
        <taxon>Methanobacteriota</taxon>
        <taxon>Archaeoglobi</taxon>
        <taxon>Archaeoglobales</taxon>
        <taxon>Archaeoglobaceae</taxon>
        <taxon>Archaeoglobus</taxon>
    </lineage>
</organism>
<keyword id="KW-1185">Reference proteome</keyword>
<keyword id="KW-0732">Signal</keyword>
<sequence length="175" mass="18783">MNRIVGILISILMLACIGVTMAAETPVEATIEPKNTFSEPLATQMVLLKGIFDPKVEPMDPANDAIEITGVLKLNHNEVRGVVNINNKKGEFAGKCTPFKSSNFEGVVLKCGSEGSIKVLQINIGDGKLELFGKYGDGIVFLEGKIPEMSYKSLASSASAPTSVRPEAWMVDILL</sequence>
<reference key="1">
    <citation type="journal article" date="1997" name="Nature">
        <title>The complete genome sequence of the hyperthermophilic, sulphate-reducing archaeon Archaeoglobus fulgidus.</title>
        <authorList>
            <person name="Klenk H.-P."/>
            <person name="Clayton R.A."/>
            <person name="Tomb J.-F."/>
            <person name="White O."/>
            <person name="Nelson K.E."/>
            <person name="Ketchum K.A."/>
            <person name="Dodson R.J."/>
            <person name="Gwinn M.L."/>
            <person name="Hickey E.K."/>
            <person name="Peterson J.D."/>
            <person name="Richardson D.L."/>
            <person name="Kerlavage A.R."/>
            <person name="Graham D.E."/>
            <person name="Kyrpides N.C."/>
            <person name="Fleischmann R.D."/>
            <person name="Quackenbush J."/>
            <person name="Lee N.H."/>
            <person name="Sutton G.G."/>
            <person name="Gill S.R."/>
            <person name="Kirkness E.F."/>
            <person name="Dougherty B.A."/>
            <person name="McKenney K."/>
            <person name="Adams M.D."/>
            <person name="Loftus B.J."/>
            <person name="Peterson S.N."/>
            <person name="Reich C.I."/>
            <person name="McNeil L.K."/>
            <person name="Badger J.H."/>
            <person name="Glodek A."/>
            <person name="Zhou L."/>
            <person name="Overbeek R."/>
            <person name="Gocayne J.D."/>
            <person name="Weidman J.F."/>
            <person name="McDonald L.A."/>
            <person name="Utterback T.R."/>
            <person name="Cotton M.D."/>
            <person name="Spriggs T."/>
            <person name="Artiach P."/>
            <person name="Kaine B.P."/>
            <person name="Sykes S.M."/>
            <person name="Sadow P.W."/>
            <person name="D'Andrea K.P."/>
            <person name="Bowman C."/>
            <person name="Fujii C."/>
            <person name="Garland S.A."/>
            <person name="Mason T.M."/>
            <person name="Olsen G.J."/>
            <person name="Fraser C.M."/>
            <person name="Smith H.O."/>
            <person name="Woese C.R."/>
            <person name="Venter J.C."/>
        </authorList>
    </citation>
    <scope>NUCLEOTIDE SEQUENCE [LARGE SCALE GENOMIC DNA]</scope>
    <source>
        <strain>ATCC 49558 / DSM 4304 / JCM 9628 / NBRC 100126 / VC-16</strain>
    </source>
</reference>
<gene>
    <name type="ordered locus">AF_0397</name>
</gene>
<protein>
    <recommendedName>
        <fullName>Uncharacterized protein AF_0397</fullName>
    </recommendedName>
</protein>
<evidence type="ECO:0000255" key="1">
    <source>
        <dbReference type="PROSITE-ProRule" id="PRU00303"/>
    </source>
</evidence>
<feature type="signal peptide" evidence="1">
    <location>
        <begin position="1"/>
        <end position="22"/>
    </location>
</feature>
<feature type="chain" id="PRO_0000013638" description="Uncharacterized protein AF_0397">
    <location>
        <begin position="23"/>
        <end position="175"/>
    </location>
</feature>
<proteinExistence type="inferred from homology"/>